<name>Y007_NPVAC</name>
<feature type="chain" id="PRO_0000132946" description="Uncharacterized 23.6 kDa protein in LEF2-PH intergenic region">
    <location>
        <begin position="1"/>
        <end position="201"/>
    </location>
</feature>
<feature type="sequence conflict" description="In Ref. 3; BAA00606." evidence="1" ref="3">
    <original>M</original>
    <variation>S</variation>
    <location>
        <position position="96"/>
    </location>
</feature>
<sequence length="201" mass="23612">MAVIFNNKQLLADNSIEKGGELFLFNGSYNILESYVNPVLLKNGVIELEEAAYYAGNILYKTDDPKFIDYINLIIKATHSEELPENSTVVNYRKTMRSGTIHPIKKDIYIYDNKKFTLYDRYIYGYDNNYVNFYEEKNEKEKEYEEEDDKASSLCENKIILSQINCESFENDFKYYLSDYNYAFSIIDNTTNVLVAFGLYR</sequence>
<reference key="1">
    <citation type="journal article" date="1990" name="J. Gen. Virol.">
        <title>Functional analysis of a 603 nucleotide open reading frame upstream of the polyhedrin gene of Autographa californica nuclear polyhedrosis virus.</title>
        <authorList>
            <person name="Gearing K.L."/>
            <person name="Possee R.D."/>
        </authorList>
    </citation>
    <scope>NUCLEOTIDE SEQUENCE [GENOMIC DNA]</scope>
    <source>
        <strain>C6</strain>
    </source>
</reference>
<reference key="2">
    <citation type="journal article" date="1991" name="Virology">
        <title>Nucleotide sequence of the Autographa californica nuclear polyhedrosis 9.4 kbp EcoRI-I and -R (polyhedrin gene) region.</title>
        <authorList>
            <person name="Possee R.D."/>
            <person name="Sun T.P."/>
            <person name="Howard S.C."/>
            <person name="Ayres M.D."/>
            <person name="Hill-Perkins M."/>
            <person name="Gearing K.L."/>
        </authorList>
    </citation>
    <scope>NUCLEOTIDE SEQUENCE [GENOMIC DNA]</scope>
    <source>
        <strain>C6</strain>
    </source>
</reference>
<reference key="3">
    <citation type="journal article" date="1994" name="Virology">
        <title>The complete DNA sequence of Autographa californica nuclear polyhedrosis virus.</title>
        <authorList>
            <person name="Ayres M.D."/>
            <person name="Howard S.C."/>
            <person name="Kuzio J."/>
            <person name="Lopez-Ferber M."/>
            <person name="Possee R.D."/>
        </authorList>
    </citation>
    <scope>NUCLEOTIDE SEQUENCE [LARGE SCALE GENOMIC DNA]</scope>
    <source>
        <strain>C6</strain>
    </source>
</reference>
<reference key="4">
    <citation type="journal article" date="1987" name="Nucleic Acids Res.">
        <title>Analysis of the polyhedrin gene promoter of the Autographa californica nuclear polyhedrosis virus.</title>
        <authorList>
            <person name="Possee R.D."/>
            <person name="Howard S.C."/>
        </authorList>
    </citation>
    <scope>NUCLEOTIDE SEQUENCE [GENOMIC DNA] OF 1-18</scope>
</reference>
<organismHost>
    <name type="scientific">Lepidoptera</name>
    <name type="common">butterflies and moths</name>
    <dbReference type="NCBI Taxonomy" id="7088"/>
</organismHost>
<comment type="function">
    <text>May have a role in tissue tropism within the insect larvae.</text>
</comment>
<dbReference type="EMBL" id="D00700">
    <property type="protein sequence ID" value="BAA00606.1"/>
    <property type="molecule type" value="Genomic_DNA"/>
</dbReference>
<dbReference type="EMBL" id="M75679">
    <property type="status" value="NOT_ANNOTATED_CDS"/>
    <property type="molecule type" value="Genomic_DNA"/>
</dbReference>
<dbReference type="EMBL" id="L22858">
    <property type="protein sequence ID" value="AAA66637.1"/>
    <property type="molecule type" value="Genomic_DNA"/>
</dbReference>
<dbReference type="PIR" id="A34146">
    <property type="entry name" value="A34146"/>
</dbReference>
<dbReference type="RefSeq" id="NP_054036.1">
    <property type="nucleotide sequence ID" value="NC_001623.1"/>
</dbReference>
<dbReference type="GeneID" id="1403839"/>
<dbReference type="KEGG" id="vg:1403839"/>
<dbReference type="OrthoDB" id="40516at10239"/>
<dbReference type="Proteomes" id="UP000008292">
    <property type="component" value="Segment"/>
</dbReference>
<keyword id="KW-0426">Late protein</keyword>
<keyword id="KW-1185">Reference proteome</keyword>
<accession>P24650</accession>
<proteinExistence type="predicted"/>
<protein>
    <recommendedName>
        <fullName>Uncharacterized 23.6 kDa protein in LEF2-PH intergenic region</fullName>
    </recommendedName>
    <alternativeName>
        <fullName>ORF603</fullName>
    </alternativeName>
</protein>
<organism>
    <name type="scientific">Autographa californica nuclear polyhedrosis virus</name>
    <name type="common">AcMNPV</name>
    <dbReference type="NCBI Taxonomy" id="46015"/>
    <lineage>
        <taxon>Viruses</taxon>
        <taxon>Viruses incertae sedis</taxon>
        <taxon>Naldaviricetes</taxon>
        <taxon>Lefavirales</taxon>
        <taxon>Baculoviridae</taxon>
        <taxon>Alphabaculovirus</taxon>
        <taxon>Alphabaculovirus aucalifornicae</taxon>
    </lineage>
</organism>
<evidence type="ECO:0000305" key="1"/>